<accession>P0A863</accession>
<accession>P37901</accession>
<accession>P57669</accession>
<accession>P76047</accession>
<accession>P77786</accession>
<evidence type="ECO:0000250" key="1"/>
<evidence type="ECO:0000255" key="2">
    <source>
        <dbReference type="HAMAP-Rule" id="MF_00269"/>
    </source>
</evidence>
<comment type="function">
    <text evidence="2">Thiol-specific peroxidase that catalyzes the reduction of hydrogen peroxide and organic hydroperoxides to water and alcohols, respectively. Plays a role in cell protection against oxidative stress by detoxifying peroxides.</text>
</comment>
<comment type="catalytic activity">
    <reaction evidence="2">
        <text>a hydroperoxide + [thioredoxin]-dithiol = an alcohol + [thioredoxin]-disulfide + H2O</text>
        <dbReference type="Rhea" id="RHEA:62620"/>
        <dbReference type="Rhea" id="RHEA-COMP:10698"/>
        <dbReference type="Rhea" id="RHEA-COMP:10700"/>
        <dbReference type="ChEBI" id="CHEBI:15377"/>
        <dbReference type="ChEBI" id="CHEBI:29950"/>
        <dbReference type="ChEBI" id="CHEBI:30879"/>
        <dbReference type="ChEBI" id="CHEBI:35924"/>
        <dbReference type="ChEBI" id="CHEBI:50058"/>
        <dbReference type="EC" id="1.11.1.24"/>
    </reaction>
</comment>
<comment type="subunit">
    <text evidence="2">Homodimer.</text>
</comment>
<comment type="miscellaneous">
    <text evidence="2">The active site is a conserved redox-active cysteine residue, the peroxidatic cysteine (C(P)), which makes the nucleophilic attack on the peroxide substrate. The peroxide oxidizes the C(P)-SH to cysteine sulfenic acid (C(P)-SOH), which then reacts with another cysteine residue, the resolving cysteine (C(R)), to form a disulfide bridge. The disulfide is subsequently reduced by an appropriate electron donor to complete the catalytic cycle. In this atypical 2-Cys peroxiredoxin, C(R) is present in the same subunit to form an intramolecular disulfide. The disulfide is subsequently reduced by thioredoxin.</text>
</comment>
<comment type="similarity">
    <text evidence="2">Belongs to the peroxiredoxin family. Tpx subfamily.</text>
</comment>
<protein>
    <recommendedName>
        <fullName evidence="2">Thiol peroxidase</fullName>
        <shortName evidence="2">Tpx</shortName>
        <ecNumber evidence="2">1.11.1.24</ecNumber>
    </recommendedName>
    <alternativeName>
        <fullName evidence="2">Peroxiredoxin tpx</fullName>
        <shortName evidence="2">Prx</shortName>
    </alternativeName>
    <alternativeName>
        <fullName evidence="2">Thioredoxin peroxidase</fullName>
    </alternativeName>
    <alternativeName>
        <fullName evidence="2">Thioredoxin-dependent peroxiredoxin</fullName>
    </alternativeName>
</protein>
<organism>
    <name type="scientific">Escherichia coli O6:H1 (strain CFT073 / ATCC 700928 / UPEC)</name>
    <dbReference type="NCBI Taxonomy" id="199310"/>
    <lineage>
        <taxon>Bacteria</taxon>
        <taxon>Pseudomonadati</taxon>
        <taxon>Pseudomonadota</taxon>
        <taxon>Gammaproteobacteria</taxon>
        <taxon>Enterobacterales</taxon>
        <taxon>Enterobacteriaceae</taxon>
        <taxon>Escherichia</taxon>
    </lineage>
</organism>
<feature type="initiator methionine" description="Removed" evidence="1">
    <location>
        <position position="1"/>
    </location>
</feature>
<feature type="chain" id="PRO_0000187879" description="Thiol peroxidase">
    <location>
        <begin position="2"/>
        <end position="168"/>
    </location>
</feature>
<feature type="domain" description="Thioredoxin" evidence="2">
    <location>
        <begin position="19"/>
        <end position="168"/>
    </location>
</feature>
<feature type="active site" description="Cysteine sulfenic acid (-SOH) intermediate" evidence="2">
    <location>
        <position position="61"/>
    </location>
</feature>
<feature type="disulfide bond" description="Redox-active" evidence="2">
    <location>
        <begin position="61"/>
        <end position="95"/>
    </location>
</feature>
<keyword id="KW-0049">Antioxidant</keyword>
<keyword id="KW-1015">Disulfide bond</keyword>
<keyword id="KW-0560">Oxidoreductase</keyword>
<keyword id="KW-0575">Peroxidase</keyword>
<keyword id="KW-0676">Redox-active center</keyword>
<keyword id="KW-1185">Reference proteome</keyword>
<gene>
    <name evidence="2" type="primary">tpx</name>
    <name type="ordered locus">c1796</name>
</gene>
<proteinExistence type="inferred from homology"/>
<sequence>MSQTVHFQGNPVTVANSIPQAGSKAQTFTLVAKDLSDVTLGQFAGKRKVLNIFPSIDTGVCAASVRKFNQLATEIDNTVVLCISADLPFAQSRFCGAEGLNNVITLSTFRNAEFLQAYGVAIADGPLKGLAARAVVVIDENDNVIFSQLVDEITTEPDYEAALAVLKA</sequence>
<dbReference type="EC" id="1.11.1.24" evidence="2"/>
<dbReference type="EMBL" id="AE014075">
    <property type="protein sequence ID" value="AAN80262.1"/>
    <property type="molecule type" value="Genomic_DNA"/>
</dbReference>
<dbReference type="RefSeq" id="WP_000084387.1">
    <property type="nucleotide sequence ID" value="NZ_CP051263.1"/>
</dbReference>
<dbReference type="SMR" id="P0A863"/>
<dbReference type="STRING" id="199310.c1796"/>
<dbReference type="GeneID" id="75203439"/>
<dbReference type="KEGG" id="ecc:c1796"/>
<dbReference type="eggNOG" id="COG2077">
    <property type="taxonomic scope" value="Bacteria"/>
</dbReference>
<dbReference type="HOGENOM" id="CLU_042529_12_2_6"/>
<dbReference type="BioCyc" id="ECOL199310:C1796-MONOMER"/>
<dbReference type="Proteomes" id="UP000001410">
    <property type="component" value="Chromosome"/>
</dbReference>
<dbReference type="GO" id="GO:0008379">
    <property type="term" value="F:thioredoxin peroxidase activity"/>
    <property type="evidence" value="ECO:0007669"/>
    <property type="project" value="UniProtKB-UniRule"/>
</dbReference>
<dbReference type="CDD" id="cd03014">
    <property type="entry name" value="PRX_Atyp2cys"/>
    <property type="match status" value="1"/>
</dbReference>
<dbReference type="FunFam" id="3.40.30.10:FF:000056">
    <property type="entry name" value="Thiol peroxidase"/>
    <property type="match status" value="1"/>
</dbReference>
<dbReference type="Gene3D" id="3.40.30.10">
    <property type="entry name" value="Glutaredoxin"/>
    <property type="match status" value="1"/>
</dbReference>
<dbReference type="HAMAP" id="MF_00269">
    <property type="entry name" value="Tpx"/>
    <property type="match status" value="1"/>
</dbReference>
<dbReference type="InterPro" id="IPR013740">
    <property type="entry name" value="Redoxin"/>
</dbReference>
<dbReference type="InterPro" id="IPR036249">
    <property type="entry name" value="Thioredoxin-like_sf"/>
</dbReference>
<dbReference type="InterPro" id="IPR013766">
    <property type="entry name" value="Thioredoxin_domain"/>
</dbReference>
<dbReference type="InterPro" id="IPR002065">
    <property type="entry name" value="TPX"/>
</dbReference>
<dbReference type="InterPro" id="IPR018219">
    <property type="entry name" value="Tpx_CS"/>
</dbReference>
<dbReference type="InterPro" id="IPR050455">
    <property type="entry name" value="Tpx_Peroxidase_subfamily"/>
</dbReference>
<dbReference type="NCBIfam" id="NF001808">
    <property type="entry name" value="PRK00522.1"/>
    <property type="match status" value="1"/>
</dbReference>
<dbReference type="PANTHER" id="PTHR43110">
    <property type="entry name" value="THIOL PEROXIDASE"/>
    <property type="match status" value="1"/>
</dbReference>
<dbReference type="PANTHER" id="PTHR43110:SF1">
    <property type="entry name" value="THIOL PEROXIDASE"/>
    <property type="match status" value="1"/>
</dbReference>
<dbReference type="Pfam" id="PF08534">
    <property type="entry name" value="Redoxin"/>
    <property type="match status" value="1"/>
</dbReference>
<dbReference type="SUPFAM" id="SSF52833">
    <property type="entry name" value="Thioredoxin-like"/>
    <property type="match status" value="1"/>
</dbReference>
<dbReference type="PROSITE" id="PS51352">
    <property type="entry name" value="THIOREDOXIN_2"/>
    <property type="match status" value="1"/>
</dbReference>
<dbReference type="PROSITE" id="PS01265">
    <property type="entry name" value="TPX"/>
    <property type="match status" value="1"/>
</dbReference>
<reference key="1">
    <citation type="journal article" date="2002" name="Proc. Natl. Acad. Sci. U.S.A.">
        <title>Extensive mosaic structure revealed by the complete genome sequence of uropathogenic Escherichia coli.</title>
        <authorList>
            <person name="Welch R.A."/>
            <person name="Burland V."/>
            <person name="Plunkett G. III"/>
            <person name="Redford P."/>
            <person name="Roesch P."/>
            <person name="Rasko D."/>
            <person name="Buckles E.L."/>
            <person name="Liou S.-R."/>
            <person name="Boutin A."/>
            <person name="Hackett J."/>
            <person name="Stroud D."/>
            <person name="Mayhew G.F."/>
            <person name="Rose D.J."/>
            <person name="Zhou S."/>
            <person name="Schwartz D.C."/>
            <person name="Perna N.T."/>
            <person name="Mobley H.L.T."/>
            <person name="Donnenberg M.S."/>
            <person name="Blattner F.R."/>
        </authorList>
    </citation>
    <scope>NUCLEOTIDE SEQUENCE [LARGE SCALE GENOMIC DNA]</scope>
    <source>
        <strain>CFT073 / ATCC 700928 / UPEC</strain>
    </source>
</reference>
<name>TPX_ECOL6</name>